<protein>
    <recommendedName>
        <fullName>Snaclec B6</fullName>
    </recommendedName>
    <alternativeName>
        <fullName>C-type lectin B6</fullName>
    </alternativeName>
</protein>
<name>SLB6_MACLB</name>
<evidence type="ECO:0000250" key="1"/>
<evidence type="ECO:0000255" key="2"/>
<evidence type="ECO:0000255" key="3">
    <source>
        <dbReference type="PROSITE-ProRule" id="PRU00040"/>
    </source>
</evidence>
<evidence type="ECO:0000305" key="4"/>
<accession>B4XT05</accession>
<comment type="function">
    <text evidence="1">Interferes with one step of hemostasis (modulation of platelet aggregation, or coagulation cascade, for example).</text>
</comment>
<comment type="subunit">
    <text evidence="1">Heterodimer; disulfide-linked.</text>
</comment>
<comment type="subcellular location">
    <subcellularLocation>
        <location evidence="1">Secreted</location>
    </subcellularLocation>
</comment>
<comment type="tissue specificity">
    <text>Expressed by the venom gland.</text>
</comment>
<comment type="miscellaneous">
    <text>Shows greater sequence similarity to the beta than alpha subunits compared to other heterodimer snaclecs.</text>
</comment>
<comment type="similarity">
    <text evidence="4">Belongs to the snaclec family.</text>
</comment>
<sequence length="125" mass="14976">DCPWDWSSHEGHCYKVFKLRKTWEDAEKFCTEQARGGHLISLKSTEEVDFMIKLAYPILKANLVWIGLRDFWRDCHMGWRDHANLLYKAWSDEPNCSVAKTTDNQWFRRKCNISQYFVCQSRVPR</sequence>
<keyword id="KW-1015">Disulfide bond</keyword>
<keyword id="KW-0325">Glycoprotein</keyword>
<keyword id="KW-1199">Hemostasis impairing toxin</keyword>
<keyword id="KW-0964">Secreted</keyword>
<keyword id="KW-0800">Toxin</keyword>
<proteinExistence type="evidence at transcript level"/>
<organism>
    <name type="scientific">Macrovipera lebetinus</name>
    <name type="common">Levantine viper</name>
    <name type="synonym">Vipera lebetina</name>
    <dbReference type="NCBI Taxonomy" id="3148341"/>
    <lineage>
        <taxon>Eukaryota</taxon>
        <taxon>Metazoa</taxon>
        <taxon>Chordata</taxon>
        <taxon>Craniata</taxon>
        <taxon>Vertebrata</taxon>
        <taxon>Euteleostomi</taxon>
        <taxon>Lepidosauria</taxon>
        <taxon>Squamata</taxon>
        <taxon>Bifurcata</taxon>
        <taxon>Unidentata</taxon>
        <taxon>Episquamata</taxon>
        <taxon>Toxicofera</taxon>
        <taxon>Serpentes</taxon>
        <taxon>Colubroidea</taxon>
        <taxon>Viperidae</taxon>
        <taxon>Viperinae</taxon>
        <taxon>Macrovipera</taxon>
    </lineage>
</organism>
<dbReference type="EMBL" id="EU085467">
    <property type="protein sequence ID" value="ABW82677.1"/>
    <property type="molecule type" value="mRNA"/>
</dbReference>
<dbReference type="SMR" id="B4XT05"/>
<dbReference type="GO" id="GO:0005576">
    <property type="term" value="C:extracellular region"/>
    <property type="evidence" value="ECO:0007669"/>
    <property type="project" value="UniProtKB-SubCell"/>
</dbReference>
<dbReference type="GO" id="GO:0090729">
    <property type="term" value="F:toxin activity"/>
    <property type="evidence" value="ECO:0007669"/>
    <property type="project" value="UniProtKB-KW"/>
</dbReference>
<dbReference type="FunFam" id="3.10.100.10:FF:000087">
    <property type="entry name" value="Snaclec rhodocetin subunit delta"/>
    <property type="match status" value="1"/>
</dbReference>
<dbReference type="Gene3D" id="3.10.100.10">
    <property type="entry name" value="Mannose-Binding Protein A, subunit A"/>
    <property type="match status" value="1"/>
</dbReference>
<dbReference type="InterPro" id="IPR001304">
    <property type="entry name" value="C-type_lectin-like"/>
</dbReference>
<dbReference type="InterPro" id="IPR016186">
    <property type="entry name" value="C-type_lectin-like/link_sf"/>
</dbReference>
<dbReference type="InterPro" id="IPR050111">
    <property type="entry name" value="C-type_lectin/snaclec_domain"/>
</dbReference>
<dbReference type="InterPro" id="IPR016187">
    <property type="entry name" value="CTDL_fold"/>
</dbReference>
<dbReference type="PANTHER" id="PTHR22803">
    <property type="entry name" value="MANNOSE, PHOSPHOLIPASE, LECTIN RECEPTOR RELATED"/>
    <property type="match status" value="1"/>
</dbReference>
<dbReference type="Pfam" id="PF00059">
    <property type="entry name" value="Lectin_C"/>
    <property type="match status" value="1"/>
</dbReference>
<dbReference type="SMART" id="SM00034">
    <property type="entry name" value="CLECT"/>
    <property type="match status" value="1"/>
</dbReference>
<dbReference type="SUPFAM" id="SSF56436">
    <property type="entry name" value="C-type lectin-like"/>
    <property type="match status" value="1"/>
</dbReference>
<dbReference type="PROSITE" id="PS50041">
    <property type="entry name" value="C_TYPE_LECTIN_2"/>
    <property type="match status" value="1"/>
</dbReference>
<reference key="1">
    <citation type="journal article" date="2009" name="Toxicon">
        <title>C-type lectin protein isoforms of Macrovipera lebetina: cDNA cloning and genetic diversity.</title>
        <authorList>
            <person name="Jebali J."/>
            <person name="Bazaa A."/>
            <person name="Sarray S."/>
            <person name="Benhaj K."/>
            <person name="Karboul A."/>
            <person name="El Ayeb M."/>
            <person name="Marrakchi N."/>
            <person name="Gargouri A."/>
        </authorList>
    </citation>
    <scope>NUCLEOTIDE SEQUENCE [MRNA]</scope>
</reference>
<feature type="chain" id="PRO_0000356337" description="Snaclec B6">
    <location>
        <begin position="1" status="less than"/>
        <end position="125"/>
    </location>
</feature>
<feature type="domain" description="C-type lectin" evidence="3">
    <location>
        <begin position="9"/>
        <end position="120"/>
    </location>
</feature>
<feature type="glycosylation site" description="N-linked (GlcNAc...) asparagine" evidence="2">
    <location>
        <position position="95"/>
    </location>
</feature>
<feature type="glycosylation site" description="N-linked (GlcNAc...) asparagine" evidence="2">
    <location>
        <position position="112"/>
    </location>
</feature>
<feature type="disulfide bond" evidence="3">
    <location>
        <begin position="2"/>
        <end position="13"/>
    </location>
</feature>
<feature type="disulfide bond" evidence="3">
    <location>
        <begin position="30"/>
        <end position="119"/>
    </location>
</feature>
<feature type="disulfide bond" description="Interchain" evidence="3">
    <location>
        <position position="75"/>
    </location>
</feature>
<feature type="disulfide bond" evidence="3">
    <location>
        <begin position="96"/>
        <end position="111"/>
    </location>
</feature>
<feature type="non-terminal residue">
    <location>
        <position position="1"/>
    </location>
</feature>